<organism>
    <name type="scientific">Thermotoga maritima (strain ATCC 43589 / DSM 3109 / JCM 10099 / NBRC 100826 / MSB8)</name>
    <dbReference type="NCBI Taxonomy" id="243274"/>
    <lineage>
        <taxon>Bacteria</taxon>
        <taxon>Thermotogati</taxon>
        <taxon>Thermotogota</taxon>
        <taxon>Thermotogae</taxon>
        <taxon>Thermotogales</taxon>
        <taxon>Thermotogaceae</taxon>
        <taxon>Thermotoga</taxon>
    </lineage>
</organism>
<accession>Q9X1G3</accession>
<proteinExistence type="inferred from homology"/>
<name>DNAG_THEMA</name>
<protein>
    <recommendedName>
        <fullName evidence="1">DNA primase</fullName>
        <ecNumber evidence="1">2.7.7.101</ecNumber>
    </recommendedName>
</protein>
<reference key="1">
    <citation type="journal article" date="1999" name="Nature">
        <title>Evidence for lateral gene transfer between Archaea and Bacteria from genome sequence of Thermotoga maritima.</title>
        <authorList>
            <person name="Nelson K.E."/>
            <person name="Clayton R.A."/>
            <person name="Gill S.R."/>
            <person name="Gwinn M.L."/>
            <person name="Dodson R.J."/>
            <person name="Haft D.H."/>
            <person name="Hickey E.K."/>
            <person name="Peterson J.D."/>
            <person name="Nelson W.C."/>
            <person name="Ketchum K.A."/>
            <person name="McDonald L.A."/>
            <person name="Utterback T.R."/>
            <person name="Malek J.A."/>
            <person name="Linher K.D."/>
            <person name="Garrett M.M."/>
            <person name="Stewart A.M."/>
            <person name="Cotton M.D."/>
            <person name="Pratt M.S."/>
            <person name="Phillips C.A."/>
            <person name="Richardson D.L."/>
            <person name="Heidelberg J.F."/>
            <person name="Sutton G.G."/>
            <person name="Fleischmann R.D."/>
            <person name="Eisen J.A."/>
            <person name="White O."/>
            <person name="Salzberg S.L."/>
            <person name="Smith H.O."/>
            <person name="Venter J.C."/>
            <person name="Fraser C.M."/>
        </authorList>
    </citation>
    <scope>NUCLEOTIDE SEQUENCE [LARGE SCALE GENOMIC DNA]</scope>
    <source>
        <strain>ATCC 43589 / DSM 3109 / JCM 10099 / NBRC 100826 / MSB8</strain>
    </source>
</reference>
<evidence type="ECO:0000255" key="1">
    <source>
        <dbReference type="HAMAP-Rule" id="MF_00974"/>
    </source>
</evidence>
<sequence>MIPREVIEEIKEKVDIVEVISEYVNLTRVGSSYRALCPFHSETNPSFYVHPGLKIYHCFGCGASGDVIKFLQEMEGISFQEALERLAKRAGIDLSLYRTEGTSEYGKYIRLYEETWKRYVKELEKSKEAKDYLKSRGFSEEDIAKFGFGYVPKRSSISIEVAEGMNITLEELVRYGIALKKGDRFVDRFEGRIVVPIKNDSGHIVAFGGRALGNEEPKYLNSPETRYFSKKKTLFLFDEAKKVAKEVGFFVITEGYFDALAFRKDGIPTAVAVLGASLSREAILKLSAYSKNVILCFDNDKAGFRATLKSLEDLLDYEFNVLVATPSPYKDPDELFQKEGEGSLKKMLKNSRSFEYFLVTAGEVFFDRNSPAGVRSYLSFLKGWVQKMRRKGYLKHIENLVNEVSSSLQIPENQILNFFESDRSNTMPVHETKSSKVYDEGRGLAYLFLNYEDLREKILELDLEVLEDKNAREFFKRVSLGEDLNKVIENFPKELKDWIFETIESIPPPKDPEKFLGDLSEKLKIRRIERRIAEIDDMIKKASNDEERRLLLSMKVDLLRKIKRR</sequence>
<gene>
    <name evidence="1" type="primary">dnaG</name>
    <name type="ordered locus">TM_1452</name>
</gene>
<dbReference type="EC" id="2.7.7.101" evidence="1"/>
<dbReference type="EMBL" id="AE000512">
    <property type="protein sequence ID" value="AAD36520.1"/>
    <property type="molecule type" value="Genomic_DNA"/>
</dbReference>
<dbReference type="PIR" id="H72253">
    <property type="entry name" value="H72253"/>
</dbReference>
<dbReference type="RefSeq" id="NP_229251.1">
    <property type="nucleotide sequence ID" value="NC_000853.1"/>
</dbReference>
<dbReference type="RefSeq" id="WP_004081732.1">
    <property type="nucleotide sequence ID" value="NC_000853.1"/>
</dbReference>
<dbReference type="SMR" id="Q9X1G3"/>
<dbReference type="FunCoup" id="Q9X1G3">
    <property type="interactions" value="284"/>
</dbReference>
<dbReference type="STRING" id="243274.TM_1452"/>
<dbReference type="PaxDb" id="243274-THEMA_07055"/>
<dbReference type="EnsemblBacteria" id="AAD36520">
    <property type="protein sequence ID" value="AAD36520"/>
    <property type="gene ID" value="TM_1452"/>
</dbReference>
<dbReference type="KEGG" id="tma:TM1452"/>
<dbReference type="KEGG" id="tmi:THEMA_07055"/>
<dbReference type="KEGG" id="tmm:Tmari_1458"/>
<dbReference type="KEGG" id="tmw:THMA_1482"/>
<dbReference type="eggNOG" id="COG0358">
    <property type="taxonomic scope" value="Bacteria"/>
</dbReference>
<dbReference type="InParanoid" id="Q9X1G3"/>
<dbReference type="OrthoDB" id="9803773at2"/>
<dbReference type="Proteomes" id="UP000008183">
    <property type="component" value="Chromosome"/>
</dbReference>
<dbReference type="GO" id="GO:0005737">
    <property type="term" value="C:cytoplasm"/>
    <property type="evidence" value="ECO:0000318"/>
    <property type="project" value="GO_Central"/>
</dbReference>
<dbReference type="GO" id="GO:0000428">
    <property type="term" value="C:DNA-directed RNA polymerase complex"/>
    <property type="evidence" value="ECO:0007669"/>
    <property type="project" value="UniProtKB-KW"/>
</dbReference>
<dbReference type="GO" id="GO:1990077">
    <property type="term" value="C:primosome complex"/>
    <property type="evidence" value="ECO:0007669"/>
    <property type="project" value="UniProtKB-KW"/>
</dbReference>
<dbReference type="GO" id="GO:0003677">
    <property type="term" value="F:DNA binding"/>
    <property type="evidence" value="ECO:0007669"/>
    <property type="project" value="UniProtKB-KW"/>
</dbReference>
<dbReference type="GO" id="GO:0003899">
    <property type="term" value="F:DNA-directed RNA polymerase activity"/>
    <property type="evidence" value="ECO:0007669"/>
    <property type="project" value="InterPro"/>
</dbReference>
<dbReference type="GO" id="GO:0008270">
    <property type="term" value="F:zinc ion binding"/>
    <property type="evidence" value="ECO:0007669"/>
    <property type="project" value="UniProtKB-UniRule"/>
</dbReference>
<dbReference type="GO" id="GO:0006269">
    <property type="term" value="P:DNA replication, synthesis of primer"/>
    <property type="evidence" value="ECO:0000318"/>
    <property type="project" value="GO_Central"/>
</dbReference>
<dbReference type="CDD" id="cd03364">
    <property type="entry name" value="TOPRIM_DnaG_primases"/>
    <property type="match status" value="1"/>
</dbReference>
<dbReference type="FunFam" id="3.90.580.10:FF:000001">
    <property type="entry name" value="DNA primase"/>
    <property type="match status" value="1"/>
</dbReference>
<dbReference type="Gene3D" id="3.40.1360.10">
    <property type="match status" value="1"/>
</dbReference>
<dbReference type="Gene3D" id="3.90.980.10">
    <property type="entry name" value="DNA primase, catalytic core, N-terminal domain"/>
    <property type="match status" value="1"/>
</dbReference>
<dbReference type="Gene3D" id="3.90.580.10">
    <property type="entry name" value="Zinc finger, CHC2-type domain"/>
    <property type="match status" value="1"/>
</dbReference>
<dbReference type="HAMAP" id="MF_00974">
    <property type="entry name" value="DNA_primase_DnaG"/>
    <property type="match status" value="1"/>
</dbReference>
<dbReference type="InterPro" id="IPR037068">
    <property type="entry name" value="DNA_primase_core_N_sf"/>
</dbReference>
<dbReference type="InterPro" id="IPR006295">
    <property type="entry name" value="DNA_primase_DnaG"/>
</dbReference>
<dbReference type="InterPro" id="IPR036977">
    <property type="entry name" value="DNA_primase_Znf_CHC2"/>
</dbReference>
<dbReference type="InterPro" id="IPR030846">
    <property type="entry name" value="DnaG_bac"/>
</dbReference>
<dbReference type="InterPro" id="IPR013264">
    <property type="entry name" value="DNAG_N"/>
</dbReference>
<dbReference type="InterPro" id="IPR050219">
    <property type="entry name" value="DnaG_primase"/>
</dbReference>
<dbReference type="InterPro" id="IPR034151">
    <property type="entry name" value="TOPRIM_DnaG_bac"/>
</dbReference>
<dbReference type="InterPro" id="IPR006171">
    <property type="entry name" value="TOPRIM_dom"/>
</dbReference>
<dbReference type="InterPro" id="IPR002694">
    <property type="entry name" value="Znf_CHC2"/>
</dbReference>
<dbReference type="NCBIfam" id="TIGR01391">
    <property type="entry name" value="dnaG"/>
    <property type="match status" value="1"/>
</dbReference>
<dbReference type="PANTHER" id="PTHR30313">
    <property type="entry name" value="DNA PRIMASE"/>
    <property type="match status" value="1"/>
</dbReference>
<dbReference type="PANTHER" id="PTHR30313:SF2">
    <property type="entry name" value="DNA PRIMASE"/>
    <property type="match status" value="1"/>
</dbReference>
<dbReference type="Pfam" id="PF08275">
    <property type="entry name" value="DNAG_N"/>
    <property type="match status" value="1"/>
</dbReference>
<dbReference type="Pfam" id="PF13155">
    <property type="entry name" value="Toprim_2"/>
    <property type="match status" value="1"/>
</dbReference>
<dbReference type="Pfam" id="PF01807">
    <property type="entry name" value="Zn_ribbon_DnaG"/>
    <property type="match status" value="1"/>
</dbReference>
<dbReference type="PIRSF" id="PIRSF002811">
    <property type="entry name" value="DnaG"/>
    <property type="match status" value="1"/>
</dbReference>
<dbReference type="SMART" id="SM00493">
    <property type="entry name" value="TOPRIM"/>
    <property type="match status" value="1"/>
</dbReference>
<dbReference type="SMART" id="SM00400">
    <property type="entry name" value="ZnF_CHCC"/>
    <property type="match status" value="1"/>
</dbReference>
<dbReference type="SUPFAM" id="SSF56731">
    <property type="entry name" value="DNA primase core"/>
    <property type="match status" value="1"/>
</dbReference>
<dbReference type="SUPFAM" id="SSF57783">
    <property type="entry name" value="Zinc beta-ribbon"/>
    <property type="match status" value="1"/>
</dbReference>
<dbReference type="PROSITE" id="PS50880">
    <property type="entry name" value="TOPRIM"/>
    <property type="match status" value="1"/>
</dbReference>
<keyword id="KW-0235">DNA replication</keyword>
<keyword id="KW-0238">DNA-binding</keyword>
<keyword id="KW-0240">DNA-directed RNA polymerase</keyword>
<keyword id="KW-0460">Magnesium</keyword>
<keyword id="KW-0479">Metal-binding</keyword>
<keyword id="KW-0548">Nucleotidyltransferase</keyword>
<keyword id="KW-0639">Primosome</keyword>
<keyword id="KW-1185">Reference proteome</keyword>
<keyword id="KW-0804">Transcription</keyword>
<keyword id="KW-0808">Transferase</keyword>
<keyword id="KW-0862">Zinc</keyword>
<keyword id="KW-0863">Zinc-finger</keyword>
<feature type="chain" id="PRO_0000180530" description="DNA primase">
    <location>
        <begin position="1"/>
        <end position="565"/>
    </location>
</feature>
<feature type="domain" description="Toprim" evidence="1">
    <location>
        <begin position="248"/>
        <end position="329"/>
    </location>
</feature>
<feature type="zinc finger region" description="CHC2-type" evidence="1">
    <location>
        <begin position="37"/>
        <end position="61"/>
    </location>
</feature>
<feature type="binding site" evidence="1">
    <location>
        <position position="254"/>
    </location>
    <ligand>
        <name>Mg(2+)</name>
        <dbReference type="ChEBI" id="CHEBI:18420"/>
        <label>1</label>
        <note>catalytic</note>
    </ligand>
</feature>
<feature type="binding site" evidence="1">
    <location>
        <position position="298"/>
    </location>
    <ligand>
        <name>Mg(2+)</name>
        <dbReference type="ChEBI" id="CHEBI:18420"/>
        <label>1</label>
        <note>catalytic</note>
    </ligand>
</feature>
<feature type="binding site" evidence="1">
    <location>
        <position position="298"/>
    </location>
    <ligand>
        <name>Mg(2+)</name>
        <dbReference type="ChEBI" id="CHEBI:18420"/>
        <label>2</label>
    </ligand>
</feature>
<feature type="binding site" evidence="1">
    <location>
        <position position="300"/>
    </location>
    <ligand>
        <name>Mg(2+)</name>
        <dbReference type="ChEBI" id="CHEBI:18420"/>
        <label>2</label>
    </ligand>
</feature>
<comment type="function">
    <text evidence="1">RNA polymerase that catalyzes the synthesis of short RNA molecules used as primers for DNA polymerase during DNA replication.</text>
</comment>
<comment type="catalytic activity">
    <reaction evidence="1">
        <text>ssDNA + n NTP = ssDNA/pppN(pN)n-1 hybrid + (n-1) diphosphate.</text>
        <dbReference type="EC" id="2.7.7.101"/>
    </reaction>
</comment>
<comment type="cofactor">
    <cofactor evidence="1">
        <name>Zn(2+)</name>
        <dbReference type="ChEBI" id="CHEBI:29105"/>
    </cofactor>
    <text evidence="1">Binds 1 zinc ion per monomer.</text>
</comment>
<comment type="cofactor">
    <cofactor evidence="1">
        <name>Mg(2+)</name>
        <dbReference type="ChEBI" id="CHEBI:18420"/>
    </cofactor>
    <text evidence="1">Binds two Mg(2+) per subunit.</text>
</comment>
<comment type="subunit">
    <text evidence="1">Monomer. Interacts with DnaB.</text>
</comment>
<comment type="domain">
    <text evidence="1">Contains an N-terminal zinc-binding domain, a central core domain that contains the primase activity, and a C-terminal DnaB-binding domain.</text>
</comment>
<comment type="similarity">
    <text evidence="1">Belongs to the DnaG primase family.</text>
</comment>